<reference key="1">
    <citation type="journal article" date="2005" name="PLoS Biol.">
        <title>The genome sequence of Rickettsia felis identifies the first putative conjugative plasmid in an obligate intracellular parasite.</title>
        <authorList>
            <person name="Ogata H."/>
            <person name="Renesto P."/>
            <person name="Audic S."/>
            <person name="Robert C."/>
            <person name="Blanc G."/>
            <person name="Fournier P.-E."/>
            <person name="Parinello H."/>
            <person name="Claverie J.-M."/>
            <person name="Raoult D."/>
        </authorList>
    </citation>
    <scope>NUCLEOTIDE SEQUENCE [LARGE SCALE GENOMIC DNA]</scope>
    <source>
        <strain>ATCC VR-1525 / URRWXCal2</strain>
    </source>
</reference>
<organism>
    <name type="scientific">Rickettsia felis (strain ATCC VR-1525 / URRWXCal2)</name>
    <name type="common">Rickettsia azadi</name>
    <dbReference type="NCBI Taxonomy" id="315456"/>
    <lineage>
        <taxon>Bacteria</taxon>
        <taxon>Pseudomonadati</taxon>
        <taxon>Pseudomonadota</taxon>
        <taxon>Alphaproteobacteria</taxon>
        <taxon>Rickettsiales</taxon>
        <taxon>Rickettsiaceae</taxon>
        <taxon>Rickettsieae</taxon>
        <taxon>Rickettsia</taxon>
        <taxon>spotted fever group</taxon>
    </lineage>
</organism>
<feature type="chain" id="PRO_0000277912" description="2-dehydro-3-deoxyphosphooctonate aldolase">
    <location>
        <begin position="1"/>
        <end position="274"/>
    </location>
</feature>
<proteinExistence type="inferred from homology"/>
<comment type="catalytic activity">
    <reaction evidence="1">
        <text>D-arabinose 5-phosphate + phosphoenolpyruvate + H2O = 3-deoxy-alpha-D-manno-2-octulosonate-8-phosphate + phosphate</text>
        <dbReference type="Rhea" id="RHEA:14053"/>
        <dbReference type="ChEBI" id="CHEBI:15377"/>
        <dbReference type="ChEBI" id="CHEBI:43474"/>
        <dbReference type="ChEBI" id="CHEBI:57693"/>
        <dbReference type="ChEBI" id="CHEBI:58702"/>
        <dbReference type="ChEBI" id="CHEBI:85985"/>
        <dbReference type="EC" id="2.5.1.55"/>
    </reaction>
</comment>
<comment type="pathway">
    <text evidence="1">Carbohydrate biosynthesis; 3-deoxy-D-manno-octulosonate biosynthesis; 3-deoxy-D-manno-octulosonate from D-ribulose 5-phosphate: step 2/3.</text>
</comment>
<comment type="pathway">
    <text evidence="1">Bacterial outer membrane biogenesis; lipopolysaccharide biosynthesis.</text>
</comment>
<comment type="subcellular location">
    <subcellularLocation>
        <location evidence="1">Cytoplasm</location>
    </subcellularLocation>
</comment>
<comment type="similarity">
    <text evidence="1">Belongs to the KdsA family.</text>
</comment>
<protein>
    <recommendedName>
        <fullName evidence="1">2-dehydro-3-deoxyphosphooctonate aldolase</fullName>
        <ecNumber evidence="1">2.5.1.55</ecNumber>
    </recommendedName>
    <alternativeName>
        <fullName evidence="1">3-deoxy-D-manno-octulosonic acid 8-phosphate synthase</fullName>
    </alternativeName>
    <alternativeName>
        <fullName evidence="1">KDO-8-phosphate synthase</fullName>
        <shortName evidence="1">KDO 8-P synthase</shortName>
        <shortName evidence="1">KDOPS</shortName>
    </alternativeName>
    <alternativeName>
        <fullName evidence="1">Phospho-2-dehydro-3-deoxyoctonate aldolase</fullName>
    </alternativeName>
</protein>
<accession>Q4UN94</accession>
<sequence>MQKVVKLNNIKIGNDLPFVLIAGPCQIEGKDHALFMAEKLVKLTSKLEIPFIYKSSFDKANRTSVNGIRGLGIEKGLEILSKVKSEFDCPIVTDVHSESQCTETAEIADILQIPAFLCRQTDLLQAAAKTGKIVKVKKGQFLAPWDMKNVQTKLEAFGVKDILFTERGACFGYNNLVSDMRSLAIIAELNVPVVFDATHSVQQPGGLGGSTGGERKYVELLAKAATAVGIAGMYMEVHQDPDNAPSDGPCMIKLDNLESILIKLKKYDKITKEK</sequence>
<gene>
    <name evidence="1" type="primary">kdsA</name>
    <name type="ordered locus">RF_0113</name>
</gene>
<evidence type="ECO:0000255" key="1">
    <source>
        <dbReference type="HAMAP-Rule" id="MF_00056"/>
    </source>
</evidence>
<name>KDSA_RICFE</name>
<keyword id="KW-0963">Cytoplasm</keyword>
<keyword id="KW-0448">Lipopolysaccharide biosynthesis</keyword>
<keyword id="KW-0808">Transferase</keyword>
<dbReference type="EC" id="2.5.1.55" evidence="1"/>
<dbReference type="EMBL" id="CP000053">
    <property type="protein sequence ID" value="AAY60964.1"/>
    <property type="molecule type" value="Genomic_DNA"/>
</dbReference>
<dbReference type="SMR" id="Q4UN94"/>
<dbReference type="STRING" id="315456.RF_0113"/>
<dbReference type="KEGG" id="rfe:RF_0113"/>
<dbReference type="eggNOG" id="COG2877">
    <property type="taxonomic scope" value="Bacteria"/>
</dbReference>
<dbReference type="HOGENOM" id="CLU_036666_0_0_5"/>
<dbReference type="OrthoDB" id="9776934at2"/>
<dbReference type="UniPathway" id="UPA00030"/>
<dbReference type="UniPathway" id="UPA00357">
    <property type="reaction ID" value="UER00474"/>
</dbReference>
<dbReference type="Proteomes" id="UP000008548">
    <property type="component" value="Chromosome"/>
</dbReference>
<dbReference type="GO" id="GO:0005737">
    <property type="term" value="C:cytoplasm"/>
    <property type="evidence" value="ECO:0007669"/>
    <property type="project" value="UniProtKB-SubCell"/>
</dbReference>
<dbReference type="GO" id="GO:0008676">
    <property type="term" value="F:3-deoxy-8-phosphooctulonate synthase activity"/>
    <property type="evidence" value="ECO:0007669"/>
    <property type="project" value="UniProtKB-UniRule"/>
</dbReference>
<dbReference type="GO" id="GO:0019294">
    <property type="term" value="P:keto-3-deoxy-D-manno-octulosonic acid biosynthetic process"/>
    <property type="evidence" value="ECO:0007669"/>
    <property type="project" value="UniProtKB-UniRule"/>
</dbReference>
<dbReference type="Gene3D" id="3.20.20.70">
    <property type="entry name" value="Aldolase class I"/>
    <property type="match status" value="1"/>
</dbReference>
<dbReference type="HAMAP" id="MF_00056">
    <property type="entry name" value="KDO8P_synth"/>
    <property type="match status" value="1"/>
</dbReference>
<dbReference type="InterPro" id="IPR013785">
    <property type="entry name" value="Aldolase_TIM"/>
</dbReference>
<dbReference type="InterPro" id="IPR006218">
    <property type="entry name" value="DAHP1/KDSA"/>
</dbReference>
<dbReference type="InterPro" id="IPR006269">
    <property type="entry name" value="KDO8P_synthase"/>
</dbReference>
<dbReference type="NCBIfam" id="TIGR01362">
    <property type="entry name" value="KDO8P_synth"/>
    <property type="match status" value="1"/>
</dbReference>
<dbReference type="NCBIfam" id="NF003543">
    <property type="entry name" value="PRK05198.1"/>
    <property type="match status" value="1"/>
</dbReference>
<dbReference type="PANTHER" id="PTHR21057">
    <property type="entry name" value="PHOSPHO-2-DEHYDRO-3-DEOXYHEPTONATE ALDOLASE"/>
    <property type="match status" value="1"/>
</dbReference>
<dbReference type="Pfam" id="PF00793">
    <property type="entry name" value="DAHP_synth_1"/>
    <property type="match status" value="1"/>
</dbReference>
<dbReference type="SUPFAM" id="SSF51569">
    <property type="entry name" value="Aldolase"/>
    <property type="match status" value="1"/>
</dbReference>